<proteinExistence type="inferred from homology"/>
<keyword id="KW-0021">Allosteric enzyme</keyword>
<keyword id="KW-0067">ATP-binding</keyword>
<keyword id="KW-0963">Cytoplasm</keyword>
<keyword id="KW-0324">Glycolysis</keyword>
<keyword id="KW-0418">Kinase</keyword>
<keyword id="KW-0460">Magnesium</keyword>
<keyword id="KW-0479">Metal-binding</keyword>
<keyword id="KW-0547">Nucleotide-binding</keyword>
<keyword id="KW-0808">Transferase</keyword>
<sequence length="319" mass="34294">MKRIGVLTSGGDSPGMNAAIRAVVRKAIFHDIEVYGIYHGYAGLISGHIEKLELGSVGDIIHRGGTKLYTARCPEFKDPEVRLKGIEQLKKHGIEGLVVIGGDGSYQGAKKLTEQGFPCVGVPGTIDNDIPGTDFTIGFDTALNTVIDAIDKIRDTATSHERTYVIEVMGRHAGDIALWAGLADGAETILIPEEEYDMDDVIARLKRGSERGKKHSIIVVAEGVGSAIDIGKHIEEATNFDTRVTVLGHVQRGGSPSAQDRVLASRLGARAVELLIAGKGGRCVGIQDNKLVDHDIIEALAQKHTIDKDMYQLSKELSI</sequence>
<organism>
    <name type="scientific">Bacillus cereus (strain B4264)</name>
    <dbReference type="NCBI Taxonomy" id="405532"/>
    <lineage>
        <taxon>Bacteria</taxon>
        <taxon>Bacillati</taxon>
        <taxon>Bacillota</taxon>
        <taxon>Bacilli</taxon>
        <taxon>Bacillales</taxon>
        <taxon>Bacillaceae</taxon>
        <taxon>Bacillus</taxon>
        <taxon>Bacillus cereus group</taxon>
    </lineage>
</organism>
<name>PFKA_BACC4</name>
<feature type="chain" id="PRO_1000120029" description="ATP-dependent 6-phosphofructokinase">
    <location>
        <begin position="1"/>
        <end position="319"/>
    </location>
</feature>
<feature type="active site" description="Proton acceptor" evidence="1">
    <location>
        <position position="127"/>
    </location>
</feature>
<feature type="binding site" evidence="1">
    <location>
        <position position="11"/>
    </location>
    <ligand>
        <name>ATP</name>
        <dbReference type="ChEBI" id="CHEBI:30616"/>
    </ligand>
</feature>
<feature type="binding site" evidence="1">
    <location>
        <begin position="21"/>
        <end position="25"/>
    </location>
    <ligand>
        <name>ADP</name>
        <dbReference type="ChEBI" id="CHEBI:456216"/>
        <note>allosteric activator; ligand shared between dimeric partners</note>
    </ligand>
</feature>
<feature type="binding site" evidence="1">
    <location>
        <begin position="72"/>
        <end position="73"/>
    </location>
    <ligand>
        <name>ATP</name>
        <dbReference type="ChEBI" id="CHEBI:30616"/>
    </ligand>
</feature>
<feature type="binding site" evidence="1">
    <location>
        <begin position="102"/>
        <end position="105"/>
    </location>
    <ligand>
        <name>ATP</name>
        <dbReference type="ChEBI" id="CHEBI:30616"/>
    </ligand>
</feature>
<feature type="binding site" evidence="1">
    <location>
        <position position="103"/>
    </location>
    <ligand>
        <name>Mg(2+)</name>
        <dbReference type="ChEBI" id="CHEBI:18420"/>
        <note>catalytic</note>
    </ligand>
</feature>
<feature type="binding site" description="in other chain" evidence="1">
    <location>
        <begin position="125"/>
        <end position="127"/>
    </location>
    <ligand>
        <name>substrate</name>
        <note>ligand shared between dimeric partners</note>
    </ligand>
</feature>
<feature type="binding site" description="in other chain" evidence="1">
    <location>
        <position position="154"/>
    </location>
    <ligand>
        <name>ADP</name>
        <dbReference type="ChEBI" id="CHEBI:456216"/>
        <note>allosteric activator; ligand shared between dimeric partners</note>
    </ligand>
</feature>
<feature type="binding site" evidence="1">
    <location>
        <position position="162"/>
    </location>
    <ligand>
        <name>substrate</name>
        <note>ligand shared between dimeric partners</note>
    </ligand>
</feature>
<feature type="binding site" description="in other chain" evidence="1">
    <location>
        <begin position="169"/>
        <end position="171"/>
    </location>
    <ligand>
        <name>substrate</name>
        <note>ligand shared between dimeric partners</note>
    </ligand>
</feature>
<feature type="binding site" description="in other chain" evidence="1">
    <location>
        <begin position="185"/>
        <end position="187"/>
    </location>
    <ligand>
        <name>ADP</name>
        <dbReference type="ChEBI" id="CHEBI:456216"/>
        <note>allosteric activator; ligand shared between dimeric partners</note>
    </ligand>
</feature>
<feature type="binding site" description="in other chain" evidence="1">
    <location>
        <position position="211"/>
    </location>
    <ligand>
        <name>ADP</name>
        <dbReference type="ChEBI" id="CHEBI:456216"/>
        <note>allosteric activator; ligand shared between dimeric partners</note>
    </ligand>
</feature>
<feature type="binding site" description="in other chain" evidence="1">
    <location>
        <begin position="213"/>
        <end position="215"/>
    </location>
    <ligand>
        <name>ADP</name>
        <dbReference type="ChEBI" id="CHEBI:456216"/>
        <note>allosteric activator; ligand shared between dimeric partners</note>
    </ligand>
</feature>
<feature type="binding site" description="in other chain" evidence="1">
    <location>
        <position position="222"/>
    </location>
    <ligand>
        <name>substrate</name>
        <note>ligand shared between dimeric partners</note>
    </ligand>
</feature>
<feature type="binding site" evidence="1">
    <location>
        <position position="243"/>
    </location>
    <ligand>
        <name>substrate</name>
        <note>ligand shared between dimeric partners</note>
    </ligand>
</feature>
<feature type="binding site" description="in other chain" evidence="1">
    <location>
        <begin position="249"/>
        <end position="252"/>
    </location>
    <ligand>
        <name>substrate</name>
        <note>ligand shared between dimeric partners</note>
    </ligand>
</feature>
<reference key="1">
    <citation type="submission" date="2008-10" db="EMBL/GenBank/DDBJ databases">
        <title>Genome sequence of Bacillus cereus B4264.</title>
        <authorList>
            <person name="Dodson R.J."/>
            <person name="Durkin A.S."/>
            <person name="Rosovitz M.J."/>
            <person name="Rasko D.A."/>
            <person name="Hoffmaster A."/>
            <person name="Ravel J."/>
            <person name="Sutton G."/>
        </authorList>
    </citation>
    <scope>NUCLEOTIDE SEQUENCE [LARGE SCALE GENOMIC DNA]</scope>
    <source>
        <strain>B4264</strain>
    </source>
</reference>
<comment type="function">
    <text evidence="1">Catalyzes the phosphorylation of D-fructose 6-phosphate to fructose 1,6-bisphosphate by ATP, the first committing step of glycolysis.</text>
</comment>
<comment type="catalytic activity">
    <reaction evidence="1">
        <text>beta-D-fructose 6-phosphate + ATP = beta-D-fructose 1,6-bisphosphate + ADP + H(+)</text>
        <dbReference type="Rhea" id="RHEA:16109"/>
        <dbReference type="ChEBI" id="CHEBI:15378"/>
        <dbReference type="ChEBI" id="CHEBI:30616"/>
        <dbReference type="ChEBI" id="CHEBI:32966"/>
        <dbReference type="ChEBI" id="CHEBI:57634"/>
        <dbReference type="ChEBI" id="CHEBI:456216"/>
        <dbReference type="EC" id="2.7.1.11"/>
    </reaction>
</comment>
<comment type="cofactor">
    <cofactor evidence="1">
        <name>Mg(2+)</name>
        <dbReference type="ChEBI" id="CHEBI:18420"/>
    </cofactor>
</comment>
<comment type="activity regulation">
    <text evidence="1">Allosterically activated by ADP and other diphosphonucleosides, and allosterically inhibited by phosphoenolpyruvate.</text>
</comment>
<comment type="pathway">
    <text evidence="1">Carbohydrate degradation; glycolysis; D-glyceraldehyde 3-phosphate and glycerone phosphate from D-glucose: step 3/4.</text>
</comment>
<comment type="subunit">
    <text evidence="1">Homotetramer.</text>
</comment>
<comment type="subcellular location">
    <subcellularLocation>
        <location evidence="1">Cytoplasm</location>
    </subcellularLocation>
</comment>
<comment type="similarity">
    <text evidence="1">Belongs to the phosphofructokinase type A (PFKA) family. ATP-dependent PFK group I subfamily. Prokaryotic clade 'B1' sub-subfamily.</text>
</comment>
<evidence type="ECO:0000255" key="1">
    <source>
        <dbReference type="HAMAP-Rule" id="MF_00339"/>
    </source>
</evidence>
<protein>
    <recommendedName>
        <fullName evidence="1">ATP-dependent 6-phosphofructokinase</fullName>
        <shortName evidence="1">ATP-PFK</shortName>
        <shortName evidence="1">Phosphofructokinase</shortName>
        <ecNumber evidence="1">2.7.1.11</ecNumber>
    </recommendedName>
    <alternativeName>
        <fullName evidence="1">Phosphohexokinase</fullName>
    </alternativeName>
</protein>
<accession>B7HFB3</accession>
<dbReference type="EC" id="2.7.1.11" evidence="1"/>
<dbReference type="EMBL" id="CP001176">
    <property type="protein sequence ID" value="ACK60056.1"/>
    <property type="molecule type" value="Genomic_DNA"/>
</dbReference>
<dbReference type="RefSeq" id="WP_000821157.1">
    <property type="nucleotide sequence ID" value="NZ_VEHB01000005.1"/>
</dbReference>
<dbReference type="SMR" id="B7HFB3"/>
<dbReference type="KEGG" id="bcb:BCB4264_A4709"/>
<dbReference type="HOGENOM" id="CLU_020655_0_1_9"/>
<dbReference type="UniPathway" id="UPA00109">
    <property type="reaction ID" value="UER00182"/>
</dbReference>
<dbReference type="Proteomes" id="UP000007096">
    <property type="component" value="Chromosome"/>
</dbReference>
<dbReference type="GO" id="GO:0005945">
    <property type="term" value="C:6-phosphofructokinase complex"/>
    <property type="evidence" value="ECO:0007669"/>
    <property type="project" value="TreeGrafter"/>
</dbReference>
<dbReference type="GO" id="GO:0003872">
    <property type="term" value="F:6-phosphofructokinase activity"/>
    <property type="evidence" value="ECO:0007669"/>
    <property type="project" value="UniProtKB-UniRule"/>
</dbReference>
<dbReference type="GO" id="GO:0016208">
    <property type="term" value="F:AMP binding"/>
    <property type="evidence" value="ECO:0007669"/>
    <property type="project" value="TreeGrafter"/>
</dbReference>
<dbReference type="GO" id="GO:0005524">
    <property type="term" value="F:ATP binding"/>
    <property type="evidence" value="ECO:0007669"/>
    <property type="project" value="UniProtKB-KW"/>
</dbReference>
<dbReference type="GO" id="GO:0070095">
    <property type="term" value="F:fructose-6-phosphate binding"/>
    <property type="evidence" value="ECO:0007669"/>
    <property type="project" value="TreeGrafter"/>
</dbReference>
<dbReference type="GO" id="GO:0042802">
    <property type="term" value="F:identical protein binding"/>
    <property type="evidence" value="ECO:0007669"/>
    <property type="project" value="TreeGrafter"/>
</dbReference>
<dbReference type="GO" id="GO:0046872">
    <property type="term" value="F:metal ion binding"/>
    <property type="evidence" value="ECO:0007669"/>
    <property type="project" value="UniProtKB-KW"/>
</dbReference>
<dbReference type="GO" id="GO:0048029">
    <property type="term" value="F:monosaccharide binding"/>
    <property type="evidence" value="ECO:0007669"/>
    <property type="project" value="TreeGrafter"/>
</dbReference>
<dbReference type="GO" id="GO:0061621">
    <property type="term" value="P:canonical glycolysis"/>
    <property type="evidence" value="ECO:0007669"/>
    <property type="project" value="TreeGrafter"/>
</dbReference>
<dbReference type="GO" id="GO:0030388">
    <property type="term" value="P:fructose 1,6-bisphosphate metabolic process"/>
    <property type="evidence" value="ECO:0007669"/>
    <property type="project" value="TreeGrafter"/>
</dbReference>
<dbReference type="GO" id="GO:0006002">
    <property type="term" value="P:fructose 6-phosphate metabolic process"/>
    <property type="evidence" value="ECO:0007669"/>
    <property type="project" value="InterPro"/>
</dbReference>
<dbReference type="CDD" id="cd00763">
    <property type="entry name" value="Bacterial_PFK"/>
    <property type="match status" value="1"/>
</dbReference>
<dbReference type="FunFam" id="3.40.50.450:FF:000001">
    <property type="entry name" value="ATP-dependent 6-phosphofructokinase"/>
    <property type="match status" value="1"/>
</dbReference>
<dbReference type="FunFam" id="3.40.50.460:FF:000002">
    <property type="entry name" value="ATP-dependent 6-phosphofructokinase"/>
    <property type="match status" value="1"/>
</dbReference>
<dbReference type="Gene3D" id="3.40.50.450">
    <property type="match status" value="1"/>
</dbReference>
<dbReference type="Gene3D" id="3.40.50.460">
    <property type="entry name" value="Phosphofructokinase domain"/>
    <property type="match status" value="1"/>
</dbReference>
<dbReference type="HAMAP" id="MF_00339">
    <property type="entry name" value="Phosphofructokinase_I_B1"/>
    <property type="match status" value="1"/>
</dbReference>
<dbReference type="InterPro" id="IPR022953">
    <property type="entry name" value="ATP_PFK"/>
</dbReference>
<dbReference type="InterPro" id="IPR012003">
    <property type="entry name" value="ATP_PFK_prok-type"/>
</dbReference>
<dbReference type="InterPro" id="IPR012828">
    <property type="entry name" value="PFKA_ATP_prok"/>
</dbReference>
<dbReference type="InterPro" id="IPR015912">
    <property type="entry name" value="Phosphofructokinase_CS"/>
</dbReference>
<dbReference type="InterPro" id="IPR000023">
    <property type="entry name" value="Phosphofructokinase_dom"/>
</dbReference>
<dbReference type="InterPro" id="IPR035966">
    <property type="entry name" value="PKF_sf"/>
</dbReference>
<dbReference type="NCBIfam" id="TIGR02482">
    <property type="entry name" value="PFKA_ATP"/>
    <property type="match status" value="1"/>
</dbReference>
<dbReference type="NCBIfam" id="NF002872">
    <property type="entry name" value="PRK03202.1"/>
    <property type="match status" value="1"/>
</dbReference>
<dbReference type="PANTHER" id="PTHR13697:SF4">
    <property type="entry name" value="ATP-DEPENDENT 6-PHOSPHOFRUCTOKINASE"/>
    <property type="match status" value="1"/>
</dbReference>
<dbReference type="PANTHER" id="PTHR13697">
    <property type="entry name" value="PHOSPHOFRUCTOKINASE"/>
    <property type="match status" value="1"/>
</dbReference>
<dbReference type="Pfam" id="PF00365">
    <property type="entry name" value="PFK"/>
    <property type="match status" value="1"/>
</dbReference>
<dbReference type="PIRSF" id="PIRSF000532">
    <property type="entry name" value="ATP_PFK_prok"/>
    <property type="match status" value="1"/>
</dbReference>
<dbReference type="PRINTS" id="PR00476">
    <property type="entry name" value="PHFRCTKINASE"/>
</dbReference>
<dbReference type="SUPFAM" id="SSF53784">
    <property type="entry name" value="Phosphofructokinase"/>
    <property type="match status" value="1"/>
</dbReference>
<dbReference type="PROSITE" id="PS00433">
    <property type="entry name" value="PHOSPHOFRUCTOKINASE"/>
    <property type="match status" value="1"/>
</dbReference>
<gene>
    <name evidence="1" type="primary">pfkA</name>
    <name type="ordered locus">BCB4264_A4709</name>
</gene>